<name>PDXH_MYCBT</name>
<feature type="chain" id="PRO_1000186319" description="Pyridoxine/pyridoxamine 5'-phosphate oxidase">
    <location>
        <begin position="1"/>
        <end position="224"/>
    </location>
</feature>
<feature type="binding site" evidence="1">
    <location>
        <begin position="19"/>
        <end position="22"/>
    </location>
    <ligand>
        <name>substrate</name>
    </ligand>
</feature>
<feature type="binding site" evidence="1">
    <location>
        <begin position="76"/>
        <end position="81"/>
    </location>
    <ligand>
        <name>FMN</name>
        <dbReference type="ChEBI" id="CHEBI:58210"/>
    </ligand>
</feature>
<feature type="binding site" evidence="1">
    <location>
        <position position="81"/>
    </location>
    <ligand>
        <name>substrate</name>
    </ligand>
</feature>
<feature type="binding site" evidence="1">
    <location>
        <begin position="91"/>
        <end position="92"/>
    </location>
    <ligand>
        <name>FMN</name>
        <dbReference type="ChEBI" id="CHEBI:58210"/>
    </ligand>
</feature>
<feature type="binding site" evidence="1">
    <location>
        <position position="98"/>
    </location>
    <ligand>
        <name>FMN</name>
        <dbReference type="ChEBI" id="CHEBI:58210"/>
    </ligand>
</feature>
<feature type="binding site" evidence="1">
    <location>
        <position position="120"/>
    </location>
    <ligand>
        <name>FMN</name>
        <dbReference type="ChEBI" id="CHEBI:58210"/>
    </ligand>
</feature>
<feature type="binding site" evidence="1">
    <location>
        <position position="138"/>
    </location>
    <ligand>
        <name>substrate</name>
    </ligand>
</feature>
<feature type="binding site" evidence="1">
    <location>
        <position position="142"/>
    </location>
    <ligand>
        <name>substrate</name>
    </ligand>
</feature>
<feature type="binding site" evidence="1">
    <location>
        <begin position="155"/>
        <end position="156"/>
    </location>
    <ligand>
        <name>FMN</name>
        <dbReference type="ChEBI" id="CHEBI:58210"/>
    </ligand>
</feature>
<feature type="binding site" evidence="1">
    <location>
        <position position="201"/>
    </location>
    <ligand>
        <name>FMN</name>
        <dbReference type="ChEBI" id="CHEBI:58210"/>
    </ligand>
</feature>
<feature type="binding site" evidence="1">
    <location>
        <begin position="207"/>
        <end position="209"/>
    </location>
    <ligand>
        <name>substrate</name>
    </ligand>
</feature>
<feature type="binding site" evidence="1">
    <location>
        <position position="211"/>
    </location>
    <ligand>
        <name>FMN</name>
        <dbReference type="ChEBI" id="CHEBI:58210"/>
    </ligand>
</feature>
<evidence type="ECO:0000255" key="1">
    <source>
        <dbReference type="HAMAP-Rule" id="MF_01629"/>
    </source>
</evidence>
<sequence>MDDDAQMVAIDKDQLARMRGEYGPEKDGCGDLDFDWLDDGWLTLLRRWLNDAQRAGVSEPNAMVLATVADGKPVTRSVLCKILDESGVAFFTSYTSAKGEQLAVTPYASATFPWYQLGRQAHVQGPVSKVSTEEIFTYWSMRPRGAQLGAWASQQSRPVGSRAQLDNQLAEVTRRFADQDQIPVPPGWGGYRIAPEIVEFWQGRENRMHNRIRVANGRLERLQP</sequence>
<comment type="function">
    <text evidence="1">Catalyzes the oxidation of either pyridoxine 5'-phosphate (PNP) or pyridoxamine 5'-phosphate (PMP) into pyridoxal 5'-phosphate (PLP).</text>
</comment>
<comment type="catalytic activity">
    <reaction evidence="1">
        <text>pyridoxamine 5'-phosphate + O2 + H2O = pyridoxal 5'-phosphate + H2O2 + NH4(+)</text>
        <dbReference type="Rhea" id="RHEA:15817"/>
        <dbReference type="ChEBI" id="CHEBI:15377"/>
        <dbReference type="ChEBI" id="CHEBI:15379"/>
        <dbReference type="ChEBI" id="CHEBI:16240"/>
        <dbReference type="ChEBI" id="CHEBI:28938"/>
        <dbReference type="ChEBI" id="CHEBI:58451"/>
        <dbReference type="ChEBI" id="CHEBI:597326"/>
        <dbReference type="EC" id="1.4.3.5"/>
    </reaction>
</comment>
<comment type="catalytic activity">
    <reaction evidence="1">
        <text>pyridoxine 5'-phosphate + O2 = pyridoxal 5'-phosphate + H2O2</text>
        <dbReference type="Rhea" id="RHEA:15149"/>
        <dbReference type="ChEBI" id="CHEBI:15379"/>
        <dbReference type="ChEBI" id="CHEBI:16240"/>
        <dbReference type="ChEBI" id="CHEBI:58589"/>
        <dbReference type="ChEBI" id="CHEBI:597326"/>
        <dbReference type="EC" id="1.4.3.5"/>
    </reaction>
</comment>
<comment type="cofactor">
    <cofactor evidence="1">
        <name>FMN</name>
        <dbReference type="ChEBI" id="CHEBI:58210"/>
    </cofactor>
    <text evidence="1">Binds 1 FMN per subunit.</text>
</comment>
<comment type="pathway">
    <text evidence="1">Cofactor metabolism; pyridoxal 5'-phosphate salvage; pyridoxal 5'-phosphate from pyridoxamine 5'-phosphate: step 1/1.</text>
</comment>
<comment type="pathway">
    <text evidence="1">Cofactor metabolism; pyridoxal 5'-phosphate salvage; pyridoxal 5'-phosphate from pyridoxine 5'-phosphate: step 1/1.</text>
</comment>
<comment type="subunit">
    <text evidence="1">Homodimer.</text>
</comment>
<comment type="similarity">
    <text evidence="1">Belongs to the pyridoxamine 5'-phosphate oxidase family.</text>
</comment>
<protein>
    <recommendedName>
        <fullName evidence="1">Pyridoxine/pyridoxamine 5'-phosphate oxidase</fullName>
        <ecNumber evidence="1">1.4.3.5</ecNumber>
    </recommendedName>
    <alternativeName>
        <fullName evidence="1">PNP/PMP oxidase</fullName>
        <shortName evidence="1">PNPOx</shortName>
    </alternativeName>
    <alternativeName>
        <fullName evidence="1">Pyridoxal 5'-phosphate synthase</fullName>
    </alternativeName>
</protein>
<keyword id="KW-0285">Flavoprotein</keyword>
<keyword id="KW-0288">FMN</keyword>
<keyword id="KW-0560">Oxidoreductase</keyword>
<keyword id="KW-0664">Pyridoxine biosynthesis</keyword>
<proteinExistence type="inferred from homology"/>
<gene>
    <name evidence="1" type="primary">pdxH</name>
    <name type="ordered locus">JTY_2626</name>
</gene>
<dbReference type="EC" id="1.4.3.5" evidence="1"/>
<dbReference type="EMBL" id="AP010918">
    <property type="protein sequence ID" value="BAH26907.1"/>
    <property type="molecule type" value="Genomic_DNA"/>
</dbReference>
<dbReference type="RefSeq" id="WP_003413471.1">
    <property type="nucleotide sequence ID" value="NZ_CP014566.1"/>
</dbReference>
<dbReference type="SMR" id="C1AF78"/>
<dbReference type="GeneID" id="45426610"/>
<dbReference type="KEGG" id="mbt:JTY_2626"/>
<dbReference type="HOGENOM" id="CLU_032263_2_2_11"/>
<dbReference type="UniPathway" id="UPA01068">
    <property type="reaction ID" value="UER00304"/>
</dbReference>
<dbReference type="UniPathway" id="UPA01068">
    <property type="reaction ID" value="UER00305"/>
</dbReference>
<dbReference type="GO" id="GO:0010181">
    <property type="term" value="F:FMN binding"/>
    <property type="evidence" value="ECO:0007669"/>
    <property type="project" value="UniProtKB-UniRule"/>
</dbReference>
<dbReference type="GO" id="GO:0004733">
    <property type="term" value="F:pyridoxamine phosphate oxidase activity"/>
    <property type="evidence" value="ECO:0007669"/>
    <property type="project" value="UniProtKB-UniRule"/>
</dbReference>
<dbReference type="GO" id="GO:0008615">
    <property type="term" value="P:pyridoxine biosynthetic process"/>
    <property type="evidence" value="ECO:0007669"/>
    <property type="project" value="UniProtKB-KW"/>
</dbReference>
<dbReference type="FunFam" id="2.30.110.10:FF:000021">
    <property type="entry name" value="Pyridoxine 5'-phosphate oxidase"/>
    <property type="match status" value="1"/>
</dbReference>
<dbReference type="Gene3D" id="2.30.110.10">
    <property type="entry name" value="Electron Transport, Fmn-binding Protein, Chain A"/>
    <property type="match status" value="1"/>
</dbReference>
<dbReference type="HAMAP" id="MF_01629">
    <property type="entry name" value="PdxH"/>
    <property type="match status" value="1"/>
</dbReference>
<dbReference type="InterPro" id="IPR000659">
    <property type="entry name" value="Pyridox_Oxase"/>
</dbReference>
<dbReference type="InterPro" id="IPR019740">
    <property type="entry name" value="Pyridox_Oxase_CS"/>
</dbReference>
<dbReference type="InterPro" id="IPR011576">
    <property type="entry name" value="Pyridox_Oxase_N"/>
</dbReference>
<dbReference type="InterPro" id="IPR019576">
    <property type="entry name" value="Pyridoxamine_oxidase_dimer_C"/>
</dbReference>
<dbReference type="InterPro" id="IPR012349">
    <property type="entry name" value="Split_barrel_FMN-bd"/>
</dbReference>
<dbReference type="NCBIfam" id="TIGR00558">
    <property type="entry name" value="pdxH"/>
    <property type="match status" value="1"/>
</dbReference>
<dbReference type="NCBIfam" id="NF004231">
    <property type="entry name" value="PRK05679.1"/>
    <property type="match status" value="1"/>
</dbReference>
<dbReference type="PANTHER" id="PTHR10851:SF0">
    <property type="entry name" value="PYRIDOXINE-5'-PHOSPHATE OXIDASE"/>
    <property type="match status" value="1"/>
</dbReference>
<dbReference type="PANTHER" id="PTHR10851">
    <property type="entry name" value="PYRIDOXINE-5-PHOSPHATE OXIDASE"/>
    <property type="match status" value="1"/>
</dbReference>
<dbReference type="Pfam" id="PF10590">
    <property type="entry name" value="PNP_phzG_C"/>
    <property type="match status" value="1"/>
</dbReference>
<dbReference type="Pfam" id="PF01243">
    <property type="entry name" value="PNPOx_N"/>
    <property type="match status" value="1"/>
</dbReference>
<dbReference type="PIRSF" id="PIRSF000190">
    <property type="entry name" value="Pyd_amn-ph_oxd"/>
    <property type="match status" value="1"/>
</dbReference>
<dbReference type="SUPFAM" id="SSF50475">
    <property type="entry name" value="FMN-binding split barrel"/>
    <property type="match status" value="1"/>
</dbReference>
<dbReference type="PROSITE" id="PS01064">
    <property type="entry name" value="PYRIDOX_OXIDASE"/>
    <property type="match status" value="1"/>
</dbReference>
<accession>C1AF78</accession>
<organism>
    <name type="scientific">Mycobacterium bovis (strain BCG / Tokyo 172 / ATCC 35737 / TMC 1019)</name>
    <dbReference type="NCBI Taxonomy" id="561275"/>
    <lineage>
        <taxon>Bacteria</taxon>
        <taxon>Bacillati</taxon>
        <taxon>Actinomycetota</taxon>
        <taxon>Actinomycetes</taxon>
        <taxon>Mycobacteriales</taxon>
        <taxon>Mycobacteriaceae</taxon>
        <taxon>Mycobacterium</taxon>
        <taxon>Mycobacterium tuberculosis complex</taxon>
    </lineage>
</organism>
<reference key="1">
    <citation type="journal article" date="2009" name="Vaccine">
        <title>Whole genome sequence analysis of Mycobacterium bovis bacillus Calmette-Guerin (BCG) Tokyo 172: a comparative study of BCG vaccine substrains.</title>
        <authorList>
            <person name="Seki M."/>
            <person name="Honda I."/>
            <person name="Fujita I."/>
            <person name="Yano I."/>
            <person name="Yamamoto S."/>
            <person name="Koyama A."/>
        </authorList>
    </citation>
    <scope>NUCLEOTIDE SEQUENCE [LARGE SCALE GENOMIC DNA]</scope>
    <source>
        <strain>BCG / Tokyo 172 / ATCC 35737 / TMC 1019</strain>
    </source>
</reference>